<name>TRMD_NITHX</name>
<feature type="chain" id="PRO_0000257439" description="tRNA (guanine-N(1)-)-methyltransferase">
    <location>
        <begin position="1"/>
        <end position="238"/>
    </location>
</feature>
<feature type="binding site" evidence="1">
    <location>
        <begin position="132"/>
        <end position="137"/>
    </location>
    <ligand>
        <name>S-adenosyl-L-methionine</name>
        <dbReference type="ChEBI" id="CHEBI:59789"/>
    </ligand>
</feature>
<reference key="1">
    <citation type="submission" date="2006-03" db="EMBL/GenBank/DDBJ databases">
        <title>Complete sequence of chromosome of Nitrobacter hamburgensis X14.</title>
        <authorList>
            <consortium name="US DOE Joint Genome Institute"/>
            <person name="Copeland A."/>
            <person name="Lucas S."/>
            <person name="Lapidus A."/>
            <person name="Barry K."/>
            <person name="Detter J.C."/>
            <person name="Glavina del Rio T."/>
            <person name="Hammon N."/>
            <person name="Israni S."/>
            <person name="Dalin E."/>
            <person name="Tice H."/>
            <person name="Pitluck S."/>
            <person name="Chain P."/>
            <person name="Malfatti S."/>
            <person name="Shin M."/>
            <person name="Vergez L."/>
            <person name="Schmutz J."/>
            <person name="Larimer F."/>
            <person name="Land M."/>
            <person name="Hauser L."/>
            <person name="Kyrpides N."/>
            <person name="Ivanova N."/>
            <person name="Ward B."/>
            <person name="Arp D."/>
            <person name="Klotz M."/>
            <person name="Stein L."/>
            <person name="O'Mullan G."/>
            <person name="Starkenburg S."/>
            <person name="Sayavedra L."/>
            <person name="Poret-Peterson A.T."/>
            <person name="Gentry M.E."/>
            <person name="Bruce D."/>
            <person name="Richardson P."/>
        </authorList>
    </citation>
    <scope>NUCLEOTIDE SEQUENCE [LARGE SCALE GENOMIC DNA]</scope>
    <source>
        <strain>DSM 10229 / NCIMB 13809 / X14</strain>
    </source>
</reference>
<gene>
    <name evidence="1" type="primary">trmD</name>
    <name type="ordered locus">Nham_3581</name>
</gene>
<protein>
    <recommendedName>
        <fullName evidence="1">tRNA (guanine-N(1)-)-methyltransferase</fullName>
        <ecNumber evidence="1">2.1.1.228</ecNumber>
    </recommendedName>
    <alternativeName>
        <fullName evidence="1">M1G-methyltransferase</fullName>
    </alternativeName>
    <alternativeName>
        <fullName evidence="1">tRNA [GM37] methyltransferase</fullName>
    </alternativeName>
</protein>
<evidence type="ECO:0000255" key="1">
    <source>
        <dbReference type="HAMAP-Rule" id="MF_00605"/>
    </source>
</evidence>
<sequence length="238" mass="25529">MWRTTVLTLFPEMFPGPLGLSLAGRALVAGLWALDVRDIRCSAADRHRSVDDTPAGGGPGMVLRADVLAKAIDAAEFSPDRPRLLMSPRGRPLTQSQIVELSAGPGPLIVCARFEGVDQRVIEARGLAEVSIGDYVLSGGEIPAMALIDACVRLLPGVMGKAESGADESFSHGLLEYPQYTRPQQFEGRPIPDILLSGDHAKVAAWRRAEAEALTKARRPDLWTAWAGQNPPKSNTDG</sequence>
<dbReference type="EC" id="2.1.1.228" evidence="1"/>
<dbReference type="EMBL" id="CP000319">
    <property type="protein sequence ID" value="ABE64310.1"/>
    <property type="molecule type" value="Genomic_DNA"/>
</dbReference>
<dbReference type="RefSeq" id="WP_011511951.1">
    <property type="nucleotide sequence ID" value="NC_007964.1"/>
</dbReference>
<dbReference type="SMR" id="Q1QHI7"/>
<dbReference type="STRING" id="323097.Nham_3581"/>
<dbReference type="KEGG" id="nha:Nham_3581"/>
<dbReference type="eggNOG" id="COG0336">
    <property type="taxonomic scope" value="Bacteria"/>
</dbReference>
<dbReference type="HOGENOM" id="CLU_047363_0_1_5"/>
<dbReference type="OrthoDB" id="9807416at2"/>
<dbReference type="Proteomes" id="UP000001953">
    <property type="component" value="Chromosome"/>
</dbReference>
<dbReference type="GO" id="GO:0005829">
    <property type="term" value="C:cytosol"/>
    <property type="evidence" value="ECO:0007669"/>
    <property type="project" value="TreeGrafter"/>
</dbReference>
<dbReference type="GO" id="GO:0052906">
    <property type="term" value="F:tRNA (guanine(37)-N1)-methyltransferase activity"/>
    <property type="evidence" value="ECO:0007669"/>
    <property type="project" value="UniProtKB-UniRule"/>
</dbReference>
<dbReference type="GO" id="GO:0002939">
    <property type="term" value="P:tRNA N1-guanine methylation"/>
    <property type="evidence" value="ECO:0007669"/>
    <property type="project" value="TreeGrafter"/>
</dbReference>
<dbReference type="CDD" id="cd18080">
    <property type="entry name" value="TrmD-like"/>
    <property type="match status" value="1"/>
</dbReference>
<dbReference type="Gene3D" id="3.40.1280.10">
    <property type="match status" value="1"/>
</dbReference>
<dbReference type="Gene3D" id="1.10.1270.20">
    <property type="entry name" value="tRNA(m1g37)methyltransferase, domain 2"/>
    <property type="match status" value="1"/>
</dbReference>
<dbReference type="HAMAP" id="MF_00605">
    <property type="entry name" value="TrmD"/>
    <property type="match status" value="1"/>
</dbReference>
<dbReference type="InterPro" id="IPR029028">
    <property type="entry name" value="Alpha/beta_knot_MTases"/>
</dbReference>
<dbReference type="InterPro" id="IPR023148">
    <property type="entry name" value="tRNA_m1G_MeTrfase_C_sf"/>
</dbReference>
<dbReference type="InterPro" id="IPR002649">
    <property type="entry name" value="tRNA_m1G_MeTrfase_TrmD"/>
</dbReference>
<dbReference type="InterPro" id="IPR029026">
    <property type="entry name" value="tRNA_m1G_MTases_N"/>
</dbReference>
<dbReference type="InterPro" id="IPR016009">
    <property type="entry name" value="tRNA_MeTrfase_TRMD/TRM10"/>
</dbReference>
<dbReference type="NCBIfam" id="NF000648">
    <property type="entry name" value="PRK00026.1"/>
    <property type="match status" value="1"/>
</dbReference>
<dbReference type="NCBIfam" id="TIGR00088">
    <property type="entry name" value="trmD"/>
    <property type="match status" value="1"/>
</dbReference>
<dbReference type="PANTHER" id="PTHR46417">
    <property type="entry name" value="TRNA (GUANINE-N(1)-)-METHYLTRANSFERASE"/>
    <property type="match status" value="1"/>
</dbReference>
<dbReference type="PANTHER" id="PTHR46417:SF1">
    <property type="entry name" value="TRNA (GUANINE-N(1)-)-METHYLTRANSFERASE"/>
    <property type="match status" value="1"/>
</dbReference>
<dbReference type="Pfam" id="PF01746">
    <property type="entry name" value="tRNA_m1G_MT"/>
    <property type="match status" value="1"/>
</dbReference>
<dbReference type="PIRSF" id="PIRSF000386">
    <property type="entry name" value="tRNA_mtase"/>
    <property type="match status" value="1"/>
</dbReference>
<dbReference type="SUPFAM" id="SSF75217">
    <property type="entry name" value="alpha/beta knot"/>
    <property type="match status" value="1"/>
</dbReference>
<proteinExistence type="inferred from homology"/>
<comment type="function">
    <text evidence="1">Specifically methylates guanosine-37 in various tRNAs.</text>
</comment>
<comment type="catalytic activity">
    <reaction evidence="1">
        <text>guanosine(37) in tRNA + S-adenosyl-L-methionine = N(1)-methylguanosine(37) in tRNA + S-adenosyl-L-homocysteine + H(+)</text>
        <dbReference type="Rhea" id="RHEA:36899"/>
        <dbReference type="Rhea" id="RHEA-COMP:10145"/>
        <dbReference type="Rhea" id="RHEA-COMP:10147"/>
        <dbReference type="ChEBI" id="CHEBI:15378"/>
        <dbReference type="ChEBI" id="CHEBI:57856"/>
        <dbReference type="ChEBI" id="CHEBI:59789"/>
        <dbReference type="ChEBI" id="CHEBI:73542"/>
        <dbReference type="ChEBI" id="CHEBI:74269"/>
        <dbReference type="EC" id="2.1.1.228"/>
    </reaction>
</comment>
<comment type="subunit">
    <text evidence="1">Homodimer.</text>
</comment>
<comment type="subcellular location">
    <subcellularLocation>
        <location evidence="1">Cytoplasm</location>
    </subcellularLocation>
</comment>
<comment type="similarity">
    <text evidence="1">Belongs to the RNA methyltransferase TrmD family.</text>
</comment>
<keyword id="KW-0963">Cytoplasm</keyword>
<keyword id="KW-0489">Methyltransferase</keyword>
<keyword id="KW-1185">Reference proteome</keyword>
<keyword id="KW-0949">S-adenosyl-L-methionine</keyword>
<keyword id="KW-0808">Transferase</keyword>
<keyword id="KW-0819">tRNA processing</keyword>
<accession>Q1QHI7</accession>
<organism>
    <name type="scientific">Nitrobacter hamburgensis (strain DSM 10229 / NCIMB 13809 / X14)</name>
    <dbReference type="NCBI Taxonomy" id="323097"/>
    <lineage>
        <taxon>Bacteria</taxon>
        <taxon>Pseudomonadati</taxon>
        <taxon>Pseudomonadota</taxon>
        <taxon>Alphaproteobacteria</taxon>
        <taxon>Hyphomicrobiales</taxon>
        <taxon>Nitrobacteraceae</taxon>
        <taxon>Nitrobacter</taxon>
    </lineage>
</organism>